<dbReference type="EC" id="1.1.1.330" evidence="4"/>
<dbReference type="EMBL" id="CU638744">
    <property type="protein sequence ID" value="CAP71700.1"/>
    <property type="status" value="ALT_INIT"/>
    <property type="molecule type" value="Genomic_DNA"/>
</dbReference>
<dbReference type="EMBL" id="FO904941">
    <property type="protein sequence ID" value="CDP31091.1"/>
    <property type="status" value="ALT_INIT"/>
    <property type="molecule type" value="Genomic_DNA"/>
</dbReference>
<dbReference type="RefSeq" id="XP_001910564.1">
    <property type="nucleotide sequence ID" value="XM_001910529.1"/>
</dbReference>
<dbReference type="SMR" id="B2B3L4"/>
<dbReference type="FunCoup" id="B2B3L4">
    <property type="interactions" value="676"/>
</dbReference>
<dbReference type="STRING" id="515849.B2B3L4"/>
<dbReference type="GeneID" id="6195171"/>
<dbReference type="KEGG" id="pan:PODANSg7603"/>
<dbReference type="eggNOG" id="KOG1014">
    <property type="taxonomic scope" value="Eukaryota"/>
</dbReference>
<dbReference type="HOGENOM" id="CLU_010194_38_0_1"/>
<dbReference type="InParanoid" id="B2B3L4"/>
<dbReference type="OrthoDB" id="5545019at2759"/>
<dbReference type="UniPathway" id="UPA00094"/>
<dbReference type="Proteomes" id="UP000001197">
    <property type="component" value="Chromosome 6"/>
</dbReference>
<dbReference type="GO" id="GO:0005789">
    <property type="term" value="C:endoplasmic reticulum membrane"/>
    <property type="evidence" value="ECO:0007669"/>
    <property type="project" value="UniProtKB-SubCell"/>
</dbReference>
<dbReference type="GO" id="GO:0045703">
    <property type="term" value="F:ketoreductase activity"/>
    <property type="evidence" value="ECO:0007669"/>
    <property type="project" value="UniProtKB-UniRule"/>
</dbReference>
<dbReference type="GO" id="GO:0141040">
    <property type="term" value="F:very-long-chain 3-oxoacyl-CoA reductase activity"/>
    <property type="evidence" value="ECO:0007669"/>
    <property type="project" value="UniProtKB-EC"/>
</dbReference>
<dbReference type="GO" id="GO:0030497">
    <property type="term" value="P:fatty acid elongation"/>
    <property type="evidence" value="ECO:0007669"/>
    <property type="project" value="UniProtKB-UniRule"/>
</dbReference>
<dbReference type="CDD" id="cd05356">
    <property type="entry name" value="17beta-HSD1_like_SDR_c"/>
    <property type="match status" value="1"/>
</dbReference>
<dbReference type="FunFam" id="3.40.50.720:FF:000317">
    <property type="entry name" value="Very-long-chain 3-oxoacyl-CoA reductase"/>
    <property type="match status" value="1"/>
</dbReference>
<dbReference type="Gene3D" id="3.40.50.720">
    <property type="entry name" value="NAD(P)-binding Rossmann-like Domain"/>
    <property type="match status" value="1"/>
</dbReference>
<dbReference type="HAMAP" id="MF_03107">
    <property type="entry name" value="3_ketoreductase"/>
    <property type="match status" value="1"/>
</dbReference>
<dbReference type="InterPro" id="IPR027533">
    <property type="entry name" value="3_ketoreductase_fungal"/>
</dbReference>
<dbReference type="InterPro" id="IPR036291">
    <property type="entry name" value="NAD(P)-bd_dom_sf"/>
</dbReference>
<dbReference type="InterPro" id="IPR020904">
    <property type="entry name" value="Sc_DH/Rdtase_CS"/>
</dbReference>
<dbReference type="InterPro" id="IPR002347">
    <property type="entry name" value="SDR_fam"/>
</dbReference>
<dbReference type="PANTHER" id="PTHR43086:SF2">
    <property type="entry name" value="HYDROXYSTEROID DEHYDROGENASE-LIKE PROTEIN 1"/>
    <property type="match status" value="1"/>
</dbReference>
<dbReference type="PANTHER" id="PTHR43086">
    <property type="entry name" value="VERY-LONG-CHAIN 3-OXOOACYL-COA REDUCTASE"/>
    <property type="match status" value="1"/>
</dbReference>
<dbReference type="Pfam" id="PF00106">
    <property type="entry name" value="adh_short"/>
    <property type="match status" value="1"/>
</dbReference>
<dbReference type="PIRSF" id="PIRSF000126">
    <property type="entry name" value="11-beta-HSD1"/>
    <property type="match status" value="1"/>
</dbReference>
<dbReference type="PRINTS" id="PR00081">
    <property type="entry name" value="GDHRDH"/>
</dbReference>
<dbReference type="SUPFAM" id="SSF51735">
    <property type="entry name" value="NAD(P)-binding Rossmann-fold domains"/>
    <property type="match status" value="1"/>
</dbReference>
<dbReference type="PROSITE" id="PS00061">
    <property type="entry name" value="ADH_SHORT"/>
    <property type="match status" value="1"/>
</dbReference>
<name>MKAR_PODAN</name>
<accession>B2B3L4</accession>
<accession>A0A090CQC0</accession>
<protein>
    <recommendedName>
        <fullName evidence="4">Very-long-chain 3-oxoacyl-CoA reductase</fullName>
        <ecNumber evidence="4">1.1.1.330</ecNumber>
    </recommendedName>
    <alternativeName>
        <fullName evidence="4">3-ketoacyl-CoA reductase</fullName>
        <shortName evidence="4">3-ketoreductase</shortName>
        <shortName evidence="4">KAR</shortName>
    </alternativeName>
    <alternativeName>
        <fullName evidence="4">Microsomal beta-keto-reductase</fullName>
    </alternativeName>
</protein>
<proteinExistence type="inferred from homology"/>
<evidence type="ECO:0000250" key="1">
    <source>
        <dbReference type="UniProtKB" id="L0E2Z4"/>
    </source>
</evidence>
<evidence type="ECO:0000250" key="2">
    <source>
        <dbReference type="UniProtKB" id="O93868"/>
    </source>
</evidence>
<evidence type="ECO:0000250" key="3">
    <source>
        <dbReference type="UniProtKB" id="P38286"/>
    </source>
</evidence>
<evidence type="ECO:0000255" key="4">
    <source>
        <dbReference type="HAMAP-Rule" id="MF_03107"/>
    </source>
</evidence>
<evidence type="ECO:0000305" key="5"/>
<gene>
    <name type="ordered locus">Pa_6_6580</name>
    <name type="ORF">PODANS_6_6580</name>
</gene>
<reference key="1">
    <citation type="journal article" date="2008" name="Genome Biol.">
        <title>The genome sequence of the model ascomycete fungus Podospora anserina.</title>
        <authorList>
            <person name="Espagne E."/>
            <person name="Lespinet O."/>
            <person name="Malagnac F."/>
            <person name="Da Silva C."/>
            <person name="Jaillon O."/>
            <person name="Porcel B.M."/>
            <person name="Couloux A."/>
            <person name="Aury J.-M."/>
            <person name="Segurens B."/>
            <person name="Poulain J."/>
            <person name="Anthouard V."/>
            <person name="Grossetete S."/>
            <person name="Khalili H."/>
            <person name="Coppin E."/>
            <person name="Dequard-Chablat M."/>
            <person name="Picard M."/>
            <person name="Contamine V."/>
            <person name="Arnaise S."/>
            <person name="Bourdais A."/>
            <person name="Berteaux-Lecellier V."/>
            <person name="Gautheret D."/>
            <person name="de Vries R.P."/>
            <person name="Battaglia E."/>
            <person name="Coutinho P.M."/>
            <person name="Danchin E.G.J."/>
            <person name="Henrissat B."/>
            <person name="El Khoury R."/>
            <person name="Sainsard-Chanet A."/>
            <person name="Boivin A."/>
            <person name="Pinan-Lucarre B."/>
            <person name="Sellem C.H."/>
            <person name="Debuchy R."/>
            <person name="Wincker P."/>
            <person name="Weissenbach J."/>
            <person name="Silar P."/>
        </authorList>
    </citation>
    <scope>NUCLEOTIDE SEQUENCE [LARGE SCALE GENOMIC DNA]</scope>
    <source>
        <strain>S / ATCC MYA-4624 / DSM 980 / FGSC 10383</strain>
    </source>
</reference>
<reference key="2">
    <citation type="journal article" date="2014" name="Genetics">
        <title>Maintaining two mating types: Structure of the mating type locus and its role in heterokaryosis in Podospora anserina.</title>
        <authorList>
            <person name="Grognet P."/>
            <person name="Bidard F."/>
            <person name="Kuchly C."/>
            <person name="Tong L.C.H."/>
            <person name="Coppin E."/>
            <person name="Benkhali J.A."/>
            <person name="Couloux A."/>
            <person name="Wincker P."/>
            <person name="Debuchy R."/>
            <person name="Silar P."/>
        </authorList>
    </citation>
    <scope>GENOME REANNOTATION</scope>
    <source>
        <strain>S / ATCC MYA-4624 / DSM 980 / FGSC 10383</strain>
    </source>
</reference>
<comment type="function">
    <text evidence="4">Component of the microsomal membrane bound fatty acid elongation system, which produces the 26-carbon very long-chain fatty acids (VLCFA) from palmitate. Catalyzes the reduction of the 3-ketoacyl-CoA intermediate that is formed in each cycle of fatty acid elongation. VLCFAs serve as precursors for ceramide and sphingolipids.</text>
</comment>
<comment type="catalytic activity">
    <reaction evidence="4">
        <text>a very-long-chain (3R)-3-hydroxyacyl-CoA + NADP(+) = a very-long-chain 3-oxoacyl-CoA + NADPH + H(+)</text>
        <dbReference type="Rhea" id="RHEA:48680"/>
        <dbReference type="ChEBI" id="CHEBI:15378"/>
        <dbReference type="ChEBI" id="CHEBI:57783"/>
        <dbReference type="ChEBI" id="CHEBI:58349"/>
        <dbReference type="ChEBI" id="CHEBI:85440"/>
        <dbReference type="ChEBI" id="CHEBI:90725"/>
        <dbReference type="EC" id="1.1.1.330"/>
    </reaction>
</comment>
<comment type="pathway">
    <text evidence="3">Lipid metabolism; fatty acid biosynthesis.</text>
</comment>
<comment type="subcellular location">
    <subcellularLocation>
        <location evidence="4">Endoplasmic reticulum membrane</location>
        <topology evidence="4">Single-pass membrane protein</topology>
    </subcellularLocation>
</comment>
<comment type="similarity">
    <text evidence="4">Belongs to the short-chain dehydrogenases/reductases (SDR) family.</text>
</comment>
<comment type="sequence caution" evidence="5">
    <conflict type="erroneous initiation">
        <sequence resource="EMBL-CDS" id="CAP71700"/>
    </conflict>
    <text>Extended N-terminus.</text>
</comment>
<comment type="sequence caution" evidence="5">
    <conflict type="erroneous initiation">
        <sequence resource="EMBL-CDS" id="CDP31091"/>
    </conflict>
    <text>Extended N-terminus.</text>
</comment>
<sequence length="340" mass="37416">MASQIAQLLEKALHFWNAVPQPLQYTFAALGALYVLRGALSFVRLLLNSFILSGPNLRKYGKKGTWAVVTGASDGLGKEFASQLASKGFNLVLVSRTQSKLDALAKELRLKWSGLETKVLAMDFSQDNDEDYERLAKLIAGLDVGILINNVGQSHSIPVSFLDTEKTELQSIVTINCLGTLKTTKVVAPILAARKKGLILTMGSFAGTMPTPYLATYSGSKAFLQHWSSSLASELAPHGVDVQFVISYLVTTAMSKVRRTSLLIPGPKQFVKAALGKIGLDSNENFPNTYTPWWSHNVFKWIIDSTVGNTSAFTIWQNRKMHVDIRNRALRKAAREAKKQ</sequence>
<organism>
    <name type="scientific">Podospora anserina (strain S / ATCC MYA-4624 / DSM 980 / FGSC 10383)</name>
    <name type="common">Pleurage anserina</name>
    <dbReference type="NCBI Taxonomy" id="515849"/>
    <lineage>
        <taxon>Eukaryota</taxon>
        <taxon>Fungi</taxon>
        <taxon>Dikarya</taxon>
        <taxon>Ascomycota</taxon>
        <taxon>Pezizomycotina</taxon>
        <taxon>Sordariomycetes</taxon>
        <taxon>Sordariomycetidae</taxon>
        <taxon>Sordariales</taxon>
        <taxon>Podosporaceae</taxon>
        <taxon>Podospora</taxon>
        <taxon>Podospora anserina</taxon>
    </lineage>
</organism>
<feature type="chain" id="PRO_0000357320" description="Very-long-chain 3-oxoacyl-CoA reductase">
    <location>
        <begin position="1"/>
        <end position="340"/>
    </location>
</feature>
<feature type="transmembrane region" description="Helical" evidence="4">
    <location>
        <begin position="23"/>
        <end position="43"/>
    </location>
</feature>
<feature type="active site" description="Proton donor" evidence="2">
    <location>
        <position position="217"/>
    </location>
</feature>
<feature type="active site" description="Lowers pKa of active site Tyr" evidence="2">
    <location>
        <position position="221"/>
    </location>
</feature>
<feature type="binding site" evidence="1">
    <location>
        <position position="68"/>
    </location>
    <ligand>
        <name>NADP(+)</name>
        <dbReference type="ChEBI" id="CHEBI:58349"/>
    </ligand>
</feature>
<feature type="binding site" evidence="1">
    <location>
        <position position="109"/>
    </location>
    <ligand>
        <name>NADP(+)</name>
        <dbReference type="ChEBI" id="CHEBI:58349"/>
    </ligand>
</feature>
<feature type="binding site" evidence="1">
    <location>
        <position position="123"/>
    </location>
    <ligand>
        <name>NADP(+)</name>
        <dbReference type="ChEBI" id="CHEBI:58349"/>
    </ligand>
</feature>
<feature type="binding site" evidence="1">
    <location>
        <position position="131"/>
    </location>
    <ligand>
        <name>NADP(+)</name>
        <dbReference type="ChEBI" id="CHEBI:58349"/>
    </ligand>
</feature>
<feature type="binding site" evidence="2">
    <location>
        <position position="150"/>
    </location>
    <ligand>
        <name>NADP(+)</name>
        <dbReference type="ChEBI" id="CHEBI:58349"/>
    </ligand>
</feature>
<feature type="binding site" evidence="1">
    <location>
        <position position="185"/>
    </location>
    <ligand>
        <name>NADP(+)</name>
        <dbReference type="ChEBI" id="CHEBI:58349"/>
    </ligand>
</feature>
<feature type="binding site" evidence="2">
    <location>
        <position position="217"/>
    </location>
    <ligand>
        <name>NADP(+)</name>
        <dbReference type="ChEBI" id="CHEBI:58349"/>
    </ligand>
</feature>
<feature type="binding site" evidence="2">
    <location>
        <position position="221"/>
    </location>
    <ligand>
        <name>NADP(+)</name>
        <dbReference type="ChEBI" id="CHEBI:58349"/>
    </ligand>
</feature>
<feature type="binding site" evidence="2">
    <location>
        <position position="250"/>
    </location>
    <ligand>
        <name>NADP(+)</name>
        <dbReference type="ChEBI" id="CHEBI:58349"/>
    </ligand>
</feature>
<feature type="binding site" evidence="1">
    <location>
        <position position="252"/>
    </location>
    <ligand>
        <name>NADP(+)</name>
        <dbReference type="ChEBI" id="CHEBI:58349"/>
    </ligand>
</feature>
<keyword id="KW-0256">Endoplasmic reticulum</keyword>
<keyword id="KW-0275">Fatty acid biosynthesis</keyword>
<keyword id="KW-0276">Fatty acid metabolism</keyword>
<keyword id="KW-0444">Lipid biosynthesis</keyword>
<keyword id="KW-0443">Lipid metabolism</keyword>
<keyword id="KW-0472">Membrane</keyword>
<keyword id="KW-0521">NADP</keyword>
<keyword id="KW-0560">Oxidoreductase</keyword>
<keyword id="KW-1185">Reference proteome</keyword>
<keyword id="KW-0812">Transmembrane</keyword>
<keyword id="KW-1133">Transmembrane helix</keyword>